<gene>
    <name type="primary">GPI10</name>
    <name type="ordered locus">YGL142C</name>
</gene>
<accession>P30777</accession>
<accession>D6VU07</accession>
<organism>
    <name type="scientific">Saccharomyces cerevisiae (strain ATCC 204508 / S288c)</name>
    <name type="common">Baker's yeast</name>
    <dbReference type="NCBI Taxonomy" id="559292"/>
    <lineage>
        <taxon>Eukaryota</taxon>
        <taxon>Fungi</taxon>
        <taxon>Dikarya</taxon>
        <taxon>Ascomycota</taxon>
        <taxon>Saccharomycotina</taxon>
        <taxon>Saccharomycetes</taxon>
        <taxon>Saccharomycetales</taxon>
        <taxon>Saccharomycetaceae</taxon>
        <taxon>Saccharomyces</taxon>
    </lineage>
</organism>
<keyword id="KW-0256">Endoplasmic reticulum</keyword>
<keyword id="KW-0328">Glycosyltransferase</keyword>
<keyword id="KW-0337">GPI-anchor biosynthesis</keyword>
<keyword id="KW-0472">Membrane</keyword>
<keyword id="KW-1185">Reference proteome</keyword>
<keyword id="KW-0808">Transferase</keyword>
<keyword id="KW-0812">Transmembrane</keyword>
<keyword id="KW-1133">Transmembrane helix</keyword>
<feature type="chain" id="PRO_0000202736" description="GPI mannosyltransferase 3">
    <location>
        <begin position="1"/>
        <end position="616"/>
    </location>
</feature>
<feature type="topological domain" description="Cytoplasmic" evidence="2">
    <location>
        <begin position="1"/>
        <end position="16"/>
    </location>
</feature>
<feature type="transmembrane region" description="Helical" evidence="2">
    <location>
        <begin position="17"/>
        <end position="37"/>
    </location>
</feature>
<feature type="topological domain" description="Lumenal" evidence="2">
    <location>
        <begin position="38"/>
        <end position="86"/>
    </location>
</feature>
<feature type="transmembrane region" description="Helical" evidence="2">
    <location>
        <begin position="87"/>
        <end position="107"/>
    </location>
</feature>
<feature type="topological domain" description="Cytoplasmic" evidence="2">
    <location>
        <begin position="108"/>
        <end position="136"/>
    </location>
</feature>
<feature type="transmembrane region" description="Helical" evidence="2">
    <location>
        <begin position="137"/>
        <end position="157"/>
    </location>
</feature>
<feature type="topological domain" description="Lumenal" evidence="2">
    <location>
        <begin position="158"/>
        <end position="188"/>
    </location>
</feature>
<feature type="transmembrane region" description="Helical" evidence="2">
    <location>
        <begin position="189"/>
        <end position="209"/>
    </location>
</feature>
<feature type="topological domain" description="Cytoplasmic" evidence="2">
    <location>
        <begin position="210"/>
        <end position="240"/>
    </location>
</feature>
<feature type="transmembrane region" description="Helical" evidence="2">
    <location>
        <begin position="241"/>
        <end position="261"/>
    </location>
</feature>
<feature type="topological domain" description="Lumenal" evidence="2">
    <location>
        <begin position="262"/>
        <end position="278"/>
    </location>
</feature>
<feature type="transmembrane region" description="Helical" evidence="2">
    <location>
        <begin position="279"/>
        <end position="299"/>
    </location>
</feature>
<feature type="topological domain" description="Cytoplasmic" evidence="2">
    <location>
        <begin position="300"/>
        <end position="338"/>
    </location>
</feature>
<feature type="transmembrane region" description="Helical" evidence="2">
    <location>
        <begin position="339"/>
        <end position="359"/>
    </location>
</feature>
<feature type="topological domain" description="Lumenal" evidence="2">
    <location>
        <begin position="360"/>
        <end position="392"/>
    </location>
</feature>
<feature type="transmembrane region" description="Helical" evidence="2">
    <location>
        <begin position="393"/>
        <end position="413"/>
    </location>
</feature>
<feature type="topological domain" description="Cytoplasmic" evidence="2">
    <location>
        <begin position="414"/>
        <end position="423"/>
    </location>
</feature>
<feature type="transmembrane region" description="Helical" evidence="2">
    <location>
        <begin position="424"/>
        <end position="444"/>
    </location>
</feature>
<feature type="topological domain" description="Lumenal" evidence="2">
    <location>
        <begin position="445"/>
        <end position="616"/>
    </location>
</feature>
<feature type="mutagenesis site" description="In gpi10-1; accumulate M2, an abnormal GPI-anchor intermediate due to the absence of third mannose." evidence="5">
    <original>A</original>
    <variation>T</variation>
    <location>
        <position position="48"/>
    </location>
</feature>
<feature type="sequence conflict" description="In Ref. 4; CAA42931." evidence="6" ref="4">
    <original>S</original>
    <variation>A</variation>
    <location>
        <position position="339"/>
    </location>
</feature>
<comment type="function">
    <text evidence="3 4 5">Mannosyltransferase involved in glycosylphosphatidylinositol-anchor biosynthesis. Transfers the third mannose to Man2-GlcN-acyl-PI during GPI precursor assembly.</text>
</comment>
<comment type="pathway">
    <text>Glycolipid biosynthesis; glycosylphosphatidylinositol-anchor biosynthesis.</text>
</comment>
<comment type="subcellular location">
    <subcellularLocation>
        <location evidence="1">Endoplasmic reticulum membrane</location>
        <topology evidence="1">Multi-pass membrane protein</topology>
    </subcellularLocation>
</comment>
<comment type="similarity">
    <text evidence="6">Belongs to the glycosyltransferase 22 family. PIGB subfamily.</text>
</comment>
<sequence>MAHEVHRIKPKLGRTQIFWVFLAFRVLNAVLTRTFFQADEFWQALEPAHWKAFKYGELTWEWKFGVRSYLFPMIFELTYRLVSLSSILLHYALLLLSTIGSDLLILLLPKYELSWQVAEDLKRLPFDVTRSFEYYGVIYAPKIVMAVLASIGEYYIVRFVQKLYLLTLDKRNEKEEEERRSGLSEITKFALLLSLTNFFNCFFITRTFINSFEMILTSIALYYWDWTGGQMIKESSFTKSLIFAFLACLQRPSSGLIWVIPSISLILNLVGKKQYHLLFITFSKVLRSFFLVFTANAIIDMYFYEKVTFPFFRFLKFNFTTPLSKFYGVAPWHFHFFQSLPIVLGASIPAFAFGLFFPLSKRSFPKKYLNPFFQVKLTILLNLLVYSTLPHKEFRFIFPLQPLFILISSFGLLRLDRDYWKRLSGLKSLLWLVPFVSVFIALLLDTFHESGSIEVMKFLHEEPEIDSLGFIMPCHSTPGQSYLHRSDIQDLWSITCNPPLHLLGDPEAYSKLETYMDESDHLYDDISAFIYKNFPPPFRKDLRSPGKTYSHEWPTYLVVFEHMENAFLKDFLKDSSYIEYNRFFNSLAHWDSRRSGDIIIYYKLPFDYSDIPAADI</sequence>
<protein>
    <recommendedName>
        <fullName>GPI mannosyltransferase 3</fullName>
        <ecNumber>2.4.1.-</ecNumber>
    </recommendedName>
    <alternativeName>
        <fullName>GPI mannosyltransferase III</fullName>
        <shortName>GPI-MT-III</shortName>
    </alternativeName>
    <alternativeName>
        <fullName>Glycosylphosphatidylinositol-anchor biosynthesis protein 10</fullName>
    </alternativeName>
</protein>
<proteinExistence type="evidence at protein level"/>
<evidence type="ECO:0000250" key="1"/>
<evidence type="ECO:0000255" key="2"/>
<evidence type="ECO:0000269" key="3">
    <source>
    </source>
</evidence>
<evidence type="ECO:0000269" key="4">
    <source>
    </source>
</evidence>
<evidence type="ECO:0000269" key="5">
    <source>
    </source>
</evidence>
<evidence type="ECO:0000305" key="6"/>
<reference key="1">
    <citation type="journal article" date="1997" name="Yeast">
        <title>The sequence of a nearly unclonable 22.8 kb segment on the left arm chromosome VII from Saccharomyces cerevisiae reveals ARO2, RPL9A, TIP1, MRF1 genes and six new open reading frames.</title>
        <authorList>
            <person name="Voet M."/>
            <person name="Defoor E."/>
            <person name="Verhasselt P."/>
            <person name="Riles L."/>
            <person name="Robben J."/>
            <person name="Volckaert G."/>
        </authorList>
    </citation>
    <scope>NUCLEOTIDE SEQUENCE [GENOMIC DNA]</scope>
    <source>
        <strain>ATCC 96604 / S288c / FY1679</strain>
    </source>
</reference>
<reference key="2">
    <citation type="journal article" date="1997" name="Nature">
        <title>The nucleotide sequence of Saccharomyces cerevisiae chromosome VII.</title>
        <authorList>
            <person name="Tettelin H."/>
            <person name="Agostoni-Carbone M.L."/>
            <person name="Albermann K."/>
            <person name="Albers M."/>
            <person name="Arroyo J."/>
            <person name="Backes U."/>
            <person name="Barreiros T."/>
            <person name="Bertani I."/>
            <person name="Bjourson A.J."/>
            <person name="Brueckner M."/>
            <person name="Bruschi C.V."/>
            <person name="Carignani G."/>
            <person name="Castagnoli L."/>
            <person name="Cerdan E."/>
            <person name="Clemente M.L."/>
            <person name="Coblenz A."/>
            <person name="Coglievina M."/>
            <person name="Coissac E."/>
            <person name="Defoor E."/>
            <person name="Del Bino S."/>
            <person name="Delius H."/>
            <person name="Delneri D."/>
            <person name="de Wergifosse P."/>
            <person name="Dujon B."/>
            <person name="Durand P."/>
            <person name="Entian K.-D."/>
            <person name="Eraso P."/>
            <person name="Escribano V."/>
            <person name="Fabiani L."/>
            <person name="Fartmann B."/>
            <person name="Feroli F."/>
            <person name="Feuermann M."/>
            <person name="Frontali L."/>
            <person name="Garcia-Gonzalez M."/>
            <person name="Garcia-Saez M.I."/>
            <person name="Goffeau A."/>
            <person name="Guerreiro P."/>
            <person name="Hani J."/>
            <person name="Hansen M."/>
            <person name="Hebling U."/>
            <person name="Hernandez K."/>
            <person name="Heumann K."/>
            <person name="Hilger F."/>
            <person name="Hofmann B."/>
            <person name="Indge K.J."/>
            <person name="James C.M."/>
            <person name="Klima R."/>
            <person name="Koetter P."/>
            <person name="Kramer B."/>
            <person name="Kramer W."/>
            <person name="Lauquin G."/>
            <person name="Leuther H."/>
            <person name="Louis E.J."/>
            <person name="Maillier E."/>
            <person name="Marconi A."/>
            <person name="Martegani E."/>
            <person name="Mazon M.J."/>
            <person name="Mazzoni C."/>
            <person name="McReynolds A.D.K."/>
            <person name="Melchioretto P."/>
            <person name="Mewes H.-W."/>
            <person name="Minenkova O."/>
            <person name="Mueller-Auer S."/>
            <person name="Nawrocki A."/>
            <person name="Netter P."/>
            <person name="Neu R."/>
            <person name="Nombela C."/>
            <person name="Oliver S.G."/>
            <person name="Panzeri L."/>
            <person name="Paoluzi S."/>
            <person name="Plevani P."/>
            <person name="Portetelle D."/>
            <person name="Portillo F."/>
            <person name="Potier S."/>
            <person name="Purnelle B."/>
            <person name="Rieger M."/>
            <person name="Riles L."/>
            <person name="Rinaldi T."/>
            <person name="Robben J."/>
            <person name="Rodrigues-Pousada C."/>
            <person name="Rodriguez-Belmonte E."/>
            <person name="Rodriguez-Torres A.M."/>
            <person name="Rose M."/>
            <person name="Ruzzi M."/>
            <person name="Saliola M."/>
            <person name="Sanchez-Perez M."/>
            <person name="Schaefer B."/>
            <person name="Schaefer M."/>
            <person name="Scharfe M."/>
            <person name="Schmidheini T."/>
            <person name="Schreer A."/>
            <person name="Skala J."/>
            <person name="Souciet J.-L."/>
            <person name="Steensma H.Y."/>
            <person name="Talla E."/>
            <person name="Thierry A."/>
            <person name="Vandenbol M."/>
            <person name="van der Aart Q.J.M."/>
            <person name="Van Dyck L."/>
            <person name="Vanoni M."/>
            <person name="Verhasselt P."/>
            <person name="Voet M."/>
            <person name="Volckaert G."/>
            <person name="Wambutt R."/>
            <person name="Watson M.D."/>
            <person name="Weber N."/>
            <person name="Wedler E."/>
            <person name="Wedler H."/>
            <person name="Wipfli P."/>
            <person name="Wolf K."/>
            <person name="Wright L.F."/>
            <person name="Zaccaria P."/>
            <person name="Zimmermann M."/>
            <person name="Zollner A."/>
            <person name="Kleine K."/>
        </authorList>
    </citation>
    <scope>NUCLEOTIDE SEQUENCE [LARGE SCALE GENOMIC DNA]</scope>
    <source>
        <strain>ATCC 204508 / S288c</strain>
    </source>
</reference>
<reference key="3">
    <citation type="journal article" date="2014" name="G3 (Bethesda)">
        <title>The reference genome sequence of Saccharomyces cerevisiae: Then and now.</title>
        <authorList>
            <person name="Engel S.R."/>
            <person name="Dietrich F.S."/>
            <person name="Fisk D.G."/>
            <person name="Binkley G."/>
            <person name="Balakrishnan R."/>
            <person name="Costanzo M.C."/>
            <person name="Dwight S.S."/>
            <person name="Hitz B.C."/>
            <person name="Karra K."/>
            <person name="Nash R.S."/>
            <person name="Weng S."/>
            <person name="Wong E.D."/>
            <person name="Lloyd P."/>
            <person name="Skrzypek M.S."/>
            <person name="Miyasato S.R."/>
            <person name="Simison M."/>
            <person name="Cherry J.M."/>
        </authorList>
    </citation>
    <scope>GENOME REANNOTATION</scope>
    <source>
        <strain>ATCC 204508 / S288c</strain>
    </source>
</reference>
<reference key="4">
    <citation type="journal article" date="1992" name="Nucleic Acids Res.">
        <title>The yeast nuclear gene MRF1 encodes a mitochondrial peptide chain release factor and cures several mitochondrial RNA splicing defects.</title>
        <authorList>
            <person name="Pel H.J."/>
            <person name="Maat M.J."/>
            <person name="Rep M."/>
            <person name="Grivell L.A."/>
        </authorList>
    </citation>
    <scope>NUCLEOTIDE SEQUENCE [GENOMIC DNA] OF 339-616</scope>
</reference>
<reference key="5">
    <citation type="journal article" date="1998" name="Biochem. J.">
        <title>Saccharomyces cerevisiae GPI10, the functional homologue of human PIG-B, is required for glycosylphosphatidylinositol-anchor synthesis.</title>
        <authorList>
            <person name="Suetterlin C."/>
            <person name="Escribano M.V."/>
            <person name="Gerold P."/>
            <person name="Maeda Y."/>
            <person name="Mazon M.J."/>
            <person name="Kinoshita T."/>
            <person name="Schwarz R.T."/>
            <person name="Riezman H."/>
        </authorList>
    </citation>
    <scope>FUNCTION</scope>
</reference>
<reference key="6">
    <citation type="journal article" date="1998" name="Glycobiology">
        <title>GPI anchor biosynthesis in yeast: phosphoethanolamine is attached to the alpha1,4-linked mannose of the complete precursor glycophospholipid.</title>
        <authorList>
            <person name="Canivenc-Gansel E."/>
            <person name="Imhof I."/>
            <person name="Reggiori F."/>
            <person name="Burda P."/>
            <person name="Conzelmann A."/>
            <person name="Benachour A."/>
        </authorList>
    </citation>
    <scope>FUNCTION</scope>
    <scope>MUTAGENESIS OF ALA-48</scope>
</reference>
<reference key="7">
    <citation type="journal article" date="2000" name="Glycobiology">
        <title>Phosphatidylethanolamine is the donor of the phosphorylethanolamine linked to the alpha1,4-linked mannose of yeast GPI structures.</title>
        <authorList>
            <person name="Imhof I."/>
            <person name="Canivenc-Gansel E."/>
            <person name="Meyer U."/>
            <person name="Conzelmann A."/>
        </authorList>
    </citation>
    <scope>FUNCTION</scope>
</reference>
<reference key="8">
    <citation type="journal article" date="2006" name="Proc. Natl. Acad. Sci. U.S.A.">
        <title>A global topology map of the Saccharomyces cerevisiae membrane proteome.</title>
        <authorList>
            <person name="Kim H."/>
            <person name="Melen K."/>
            <person name="Oesterberg M."/>
            <person name="von Heijne G."/>
        </authorList>
    </citation>
    <scope>TOPOLOGY [LARGE SCALE ANALYSIS]</scope>
    <source>
        <strain>ATCC 208353 / W303-1A</strain>
    </source>
</reference>
<dbReference type="EC" id="2.4.1.-"/>
<dbReference type="EMBL" id="X99960">
    <property type="protein sequence ID" value="CAA68220.1"/>
    <property type="molecule type" value="Genomic_DNA"/>
</dbReference>
<dbReference type="EMBL" id="Z72664">
    <property type="protein sequence ID" value="CAA96854.1"/>
    <property type="molecule type" value="Genomic_DNA"/>
</dbReference>
<dbReference type="EMBL" id="X60381">
    <property type="protein sequence ID" value="CAA42931.1"/>
    <property type="molecule type" value="Genomic_DNA"/>
</dbReference>
<dbReference type="EMBL" id="BK006941">
    <property type="protein sequence ID" value="DAA07968.1"/>
    <property type="molecule type" value="Genomic_DNA"/>
</dbReference>
<dbReference type="PIR" id="S64156">
    <property type="entry name" value="S64156"/>
</dbReference>
<dbReference type="RefSeq" id="NP_011373.1">
    <property type="nucleotide sequence ID" value="NM_001181007.1"/>
</dbReference>
<dbReference type="BioGRID" id="33110">
    <property type="interactions" value="449"/>
</dbReference>
<dbReference type="DIP" id="DIP-6707N"/>
<dbReference type="FunCoup" id="P30777">
    <property type="interactions" value="980"/>
</dbReference>
<dbReference type="IntAct" id="P30777">
    <property type="interactions" value="2"/>
</dbReference>
<dbReference type="STRING" id="4932.YGL142C"/>
<dbReference type="CAZy" id="GT22">
    <property type="family name" value="Glycosyltransferase Family 22"/>
</dbReference>
<dbReference type="PaxDb" id="4932-YGL142C"/>
<dbReference type="PeptideAtlas" id="P30777"/>
<dbReference type="EnsemblFungi" id="YGL142C_mRNA">
    <property type="protein sequence ID" value="YGL142C"/>
    <property type="gene ID" value="YGL142C"/>
</dbReference>
<dbReference type="GeneID" id="852735"/>
<dbReference type="KEGG" id="sce:YGL142C"/>
<dbReference type="AGR" id="SGD:S000003110"/>
<dbReference type="SGD" id="S000003110">
    <property type="gene designation" value="GPI10"/>
</dbReference>
<dbReference type="VEuPathDB" id="FungiDB:YGL142C"/>
<dbReference type="eggNOG" id="KOG1771">
    <property type="taxonomic scope" value="Eukaryota"/>
</dbReference>
<dbReference type="GeneTree" id="ENSGT00950000183090"/>
<dbReference type="HOGENOM" id="CLU_012353_2_0_1"/>
<dbReference type="InParanoid" id="P30777"/>
<dbReference type="OMA" id="HEWPDYL"/>
<dbReference type="OrthoDB" id="416834at2759"/>
<dbReference type="BioCyc" id="YEAST:YGL142C-MONOMER"/>
<dbReference type="Reactome" id="R-SCE-162710">
    <property type="pathway name" value="Synthesis of glycosylphosphatidylinositol (GPI)"/>
</dbReference>
<dbReference type="UniPathway" id="UPA00196"/>
<dbReference type="BioGRID-ORCS" id="852735">
    <property type="hits" value="1 hit in 10 CRISPR screens"/>
</dbReference>
<dbReference type="PRO" id="PR:P30777"/>
<dbReference type="Proteomes" id="UP000002311">
    <property type="component" value="Chromosome VII"/>
</dbReference>
<dbReference type="RNAct" id="P30777">
    <property type="molecule type" value="protein"/>
</dbReference>
<dbReference type="GO" id="GO:0005783">
    <property type="term" value="C:endoplasmic reticulum"/>
    <property type="evidence" value="ECO:0000250"/>
    <property type="project" value="SGD"/>
</dbReference>
<dbReference type="GO" id="GO:0005789">
    <property type="term" value="C:endoplasmic reticulum membrane"/>
    <property type="evidence" value="ECO:0000318"/>
    <property type="project" value="GO_Central"/>
</dbReference>
<dbReference type="GO" id="GO:0000026">
    <property type="term" value="F:alpha-1,2-mannosyltransferase activity"/>
    <property type="evidence" value="ECO:0000315"/>
    <property type="project" value="SGD"/>
</dbReference>
<dbReference type="GO" id="GO:0006506">
    <property type="term" value="P:GPI anchor biosynthetic process"/>
    <property type="evidence" value="ECO:0000315"/>
    <property type="project" value="SGD"/>
</dbReference>
<dbReference type="InterPro" id="IPR005599">
    <property type="entry name" value="GPI_mannosylTrfase"/>
</dbReference>
<dbReference type="PANTHER" id="PTHR22760">
    <property type="entry name" value="GLYCOSYLTRANSFERASE"/>
    <property type="match status" value="1"/>
</dbReference>
<dbReference type="PANTHER" id="PTHR22760:SF4">
    <property type="entry name" value="GPI MANNOSYLTRANSFERASE 3"/>
    <property type="match status" value="1"/>
</dbReference>
<dbReference type="Pfam" id="PF03901">
    <property type="entry name" value="Glyco_transf_22"/>
    <property type="match status" value="1"/>
</dbReference>
<name>GPI10_YEAST</name>